<evidence type="ECO:0000255" key="1">
    <source>
        <dbReference type="HAMAP-Rule" id="MF_01328"/>
    </source>
</evidence>
<evidence type="ECO:0000256" key="2">
    <source>
        <dbReference type="SAM" id="MobiDB-lite"/>
    </source>
</evidence>
<evidence type="ECO:0000305" key="3"/>
<accession>C3P9Q6</accession>
<keyword id="KW-0687">Ribonucleoprotein</keyword>
<keyword id="KW-0689">Ribosomal protein</keyword>
<keyword id="KW-0694">RNA-binding</keyword>
<keyword id="KW-0699">rRNA-binding</keyword>
<organism>
    <name type="scientific">Bacillus anthracis (strain A0248)</name>
    <dbReference type="NCBI Taxonomy" id="592021"/>
    <lineage>
        <taxon>Bacteria</taxon>
        <taxon>Bacillati</taxon>
        <taxon>Bacillota</taxon>
        <taxon>Bacilli</taxon>
        <taxon>Bacillales</taxon>
        <taxon>Bacillaceae</taxon>
        <taxon>Bacillus</taxon>
        <taxon>Bacillus cereus group</taxon>
    </lineage>
</organism>
<dbReference type="EMBL" id="CP001598">
    <property type="protein sequence ID" value="ACQ48933.1"/>
    <property type="molecule type" value="Genomic_DNA"/>
</dbReference>
<dbReference type="RefSeq" id="WP_001127258.1">
    <property type="nucleotide sequence ID" value="NC_012659.1"/>
</dbReference>
<dbReference type="SMR" id="C3P9Q6"/>
<dbReference type="GeneID" id="93010942"/>
<dbReference type="KEGG" id="bai:BAA_0127"/>
<dbReference type="HOGENOM" id="CLU_041575_5_2_9"/>
<dbReference type="GO" id="GO:1990904">
    <property type="term" value="C:ribonucleoprotein complex"/>
    <property type="evidence" value="ECO:0007669"/>
    <property type="project" value="UniProtKB-KW"/>
</dbReference>
<dbReference type="GO" id="GO:0005840">
    <property type="term" value="C:ribosome"/>
    <property type="evidence" value="ECO:0007669"/>
    <property type="project" value="UniProtKB-KW"/>
</dbReference>
<dbReference type="GO" id="GO:0019843">
    <property type="term" value="F:rRNA binding"/>
    <property type="evidence" value="ECO:0007669"/>
    <property type="project" value="UniProtKB-UniRule"/>
</dbReference>
<dbReference type="GO" id="GO:0003735">
    <property type="term" value="F:structural constituent of ribosome"/>
    <property type="evidence" value="ECO:0007669"/>
    <property type="project" value="InterPro"/>
</dbReference>
<dbReference type="GO" id="GO:0006412">
    <property type="term" value="P:translation"/>
    <property type="evidence" value="ECO:0007669"/>
    <property type="project" value="UniProtKB-UniRule"/>
</dbReference>
<dbReference type="FunFam" id="3.40.1370.10:FF:000003">
    <property type="entry name" value="50S ribosomal protein L4"/>
    <property type="match status" value="1"/>
</dbReference>
<dbReference type="Gene3D" id="3.40.1370.10">
    <property type="match status" value="1"/>
</dbReference>
<dbReference type="HAMAP" id="MF_01328_B">
    <property type="entry name" value="Ribosomal_uL4_B"/>
    <property type="match status" value="1"/>
</dbReference>
<dbReference type="InterPro" id="IPR002136">
    <property type="entry name" value="Ribosomal_uL4"/>
</dbReference>
<dbReference type="InterPro" id="IPR013005">
    <property type="entry name" value="Ribosomal_uL4-like"/>
</dbReference>
<dbReference type="InterPro" id="IPR023574">
    <property type="entry name" value="Ribosomal_uL4_dom_sf"/>
</dbReference>
<dbReference type="NCBIfam" id="TIGR03953">
    <property type="entry name" value="rplD_bact"/>
    <property type="match status" value="1"/>
</dbReference>
<dbReference type="PANTHER" id="PTHR10746">
    <property type="entry name" value="50S RIBOSOMAL PROTEIN L4"/>
    <property type="match status" value="1"/>
</dbReference>
<dbReference type="PANTHER" id="PTHR10746:SF6">
    <property type="entry name" value="LARGE RIBOSOMAL SUBUNIT PROTEIN UL4M"/>
    <property type="match status" value="1"/>
</dbReference>
<dbReference type="Pfam" id="PF00573">
    <property type="entry name" value="Ribosomal_L4"/>
    <property type="match status" value="1"/>
</dbReference>
<dbReference type="SUPFAM" id="SSF52166">
    <property type="entry name" value="Ribosomal protein L4"/>
    <property type="match status" value="1"/>
</dbReference>
<reference key="1">
    <citation type="submission" date="2009-04" db="EMBL/GenBank/DDBJ databases">
        <title>Genome sequence of Bacillus anthracis A0248.</title>
        <authorList>
            <person name="Dodson R.J."/>
            <person name="Munk A.C."/>
            <person name="Bruce D."/>
            <person name="Detter C."/>
            <person name="Tapia R."/>
            <person name="Sutton G."/>
            <person name="Sims D."/>
            <person name="Brettin T."/>
        </authorList>
    </citation>
    <scope>NUCLEOTIDE SEQUENCE [LARGE SCALE GENOMIC DNA]</scope>
    <source>
        <strain>A0248</strain>
    </source>
</reference>
<name>RL4_BACAA</name>
<proteinExistence type="inferred from homology"/>
<protein>
    <recommendedName>
        <fullName evidence="1">Large ribosomal subunit protein uL4</fullName>
    </recommendedName>
    <alternativeName>
        <fullName evidence="3">50S ribosomal protein L4</fullName>
    </alternativeName>
</protein>
<feature type="chain" id="PRO_1000165983" description="Large ribosomal subunit protein uL4">
    <location>
        <begin position="1"/>
        <end position="207"/>
    </location>
</feature>
<feature type="region of interest" description="Disordered" evidence="2">
    <location>
        <begin position="45"/>
        <end position="89"/>
    </location>
</feature>
<feature type="compositionally biased region" description="Basic residues" evidence="2">
    <location>
        <begin position="60"/>
        <end position="71"/>
    </location>
</feature>
<sequence>MPKVTVYNQTGSQVGEIELAEAIFGIEPNEAVLFEAVMMQRASLRQGTHKVKTRSEVRGGGRKPWRQKGTGRARQGSIRSPQWRGGGTVFGPTPRSYAYKLPKKVRRLAIKSALATKVVENNIVVLEDLVLNAPKTKDMLAVLKGLTVEKKALIVTADANESVELSARNIPGVTVITADGVNVLDVLHHDKLIMTKAAVEKVEEVLA</sequence>
<gene>
    <name evidence="1" type="primary">rplD</name>
    <name type="ordered locus">BAA_0127</name>
</gene>
<comment type="function">
    <text evidence="1">One of the primary rRNA binding proteins, this protein initially binds near the 5'-end of the 23S rRNA. It is important during the early stages of 50S assembly. It makes multiple contacts with different domains of the 23S rRNA in the assembled 50S subunit and ribosome.</text>
</comment>
<comment type="function">
    <text evidence="1">Forms part of the polypeptide exit tunnel.</text>
</comment>
<comment type="subunit">
    <text evidence="1">Part of the 50S ribosomal subunit.</text>
</comment>
<comment type="similarity">
    <text evidence="1">Belongs to the universal ribosomal protein uL4 family.</text>
</comment>